<dbReference type="EMBL" id="CP000148">
    <property type="protein sequence ID" value="ABB30863.1"/>
    <property type="molecule type" value="Genomic_DNA"/>
</dbReference>
<dbReference type="RefSeq" id="WP_011365696.1">
    <property type="nucleotide sequence ID" value="NC_007517.1"/>
</dbReference>
<dbReference type="SMR" id="Q39Y11"/>
<dbReference type="STRING" id="269799.Gmet_0621"/>
<dbReference type="KEGG" id="gme:Gmet_0621"/>
<dbReference type="eggNOG" id="COG0048">
    <property type="taxonomic scope" value="Bacteria"/>
</dbReference>
<dbReference type="HOGENOM" id="CLU_104295_1_2_7"/>
<dbReference type="Proteomes" id="UP000007073">
    <property type="component" value="Chromosome"/>
</dbReference>
<dbReference type="GO" id="GO:0015935">
    <property type="term" value="C:small ribosomal subunit"/>
    <property type="evidence" value="ECO:0007669"/>
    <property type="project" value="InterPro"/>
</dbReference>
<dbReference type="GO" id="GO:0019843">
    <property type="term" value="F:rRNA binding"/>
    <property type="evidence" value="ECO:0007669"/>
    <property type="project" value="UniProtKB-UniRule"/>
</dbReference>
<dbReference type="GO" id="GO:0003735">
    <property type="term" value="F:structural constituent of ribosome"/>
    <property type="evidence" value="ECO:0007669"/>
    <property type="project" value="InterPro"/>
</dbReference>
<dbReference type="GO" id="GO:0000049">
    <property type="term" value="F:tRNA binding"/>
    <property type="evidence" value="ECO:0007669"/>
    <property type="project" value="UniProtKB-UniRule"/>
</dbReference>
<dbReference type="GO" id="GO:0006412">
    <property type="term" value="P:translation"/>
    <property type="evidence" value="ECO:0007669"/>
    <property type="project" value="UniProtKB-UniRule"/>
</dbReference>
<dbReference type="CDD" id="cd03368">
    <property type="entry name" value="Ribosomal_S12"/>
    <property type="match status" value="1"/>
</dbReference>
<dbReference type="FunFam" id="2.40.50.140:FF:000001">
    <property type="entry name" value="30S ribosomal protein S12"/>
    <property type="match status" value="1"/>
</dbReference>
<dbReference type="Gene3D" id="2.40.50.140">
    <property type="entry name" value="Nucleic acid-binding proteins"/>
    <property type="match status" value="1"/>
</dbReference>
<dbReference type="HAMAP" id="MF_00403_B">
    <property type="entry name" value="Ribosomal_uS12_B"/>
    <property type="match status" value="1"/>
</dbReference>
<dbReference type="InterPro" id="IPR012340">
    <property type="entry name" value="NA-bd_OB-fold"/>
</dbReference>
<dbReference type="InterPro" id="IPR006032">
    <property type="entry name" value="Ribosomal_uS12"/>
</dbReference>
<dbReference type="InterPro" id="IPR005679">
    <property type="entry name" value="Ribosomal_uS12_bac"/>
</dbReference>
<dbReference type="NCBIfam" id="TIGR00981">
    <property type="entry name" value="rpsL_bact"/>
    <property type="match status" value="1"/>
</dbReference>
<dbReference type="PANTHER" id="PTHR11652">
    <property type="entry name" value="30S RIBOSOMAL PROTEIN S12 FAMILY MEMBER"/>
    <property type="match status" value="1"/>
</dbReference>
<dbReference type="Pfam" id="PF00164">
    <property type="entry name" value="Ribosom_S12_S23"/>
    <property type="match status" value="1"/>
</dbReference>
<dbReference type="PIRSF" id="PIRSF002133">
    <property type="entry name" value="Ribosomal_S12/S23"/>
    <property type="match status" value="1"/>
</dbReference>
<dbReference type="PRINTS" id="PR01034">
    <property type="entry name" value="RIBOSOMALS12"/>
</dbReference>
<dbReference type="SUPFAM" id="SSF50249">
    <property type="entry name" value="Nucleic acid-binding proteins"/>
    <property type="match status" value="1"/>
</dbReference>
<dbReference type="PROSITE" id="PS00055">
    <property type="entry name" value="RIBOSOMAL_S12"/>
    <property type="match status" value="1"/>
</dbReference>
<name>RS12_GEOMG</name>
<protein>
    <recommendedName>
        <fullName evidence="2">Small ribosomal subunit protein uS12</fullName>
    </recommendedName>
    <alternativeName>
        <fullName evidence="3">30S ribosomal protein S12</fullName>
    </alternativeName>
</protein>
<proteinExistence type="inferred from homology"/>
<keyword id="KW-0488">Methylation</keyword>
<keyword id="KW-1185">Reference proteome</keyword>
<keyword id="KW-0687">Ribonucleoprotein</keyword>
<keyword id="KW-0689">Ribosomal protein</keyword>
<keyword id="KW-0694">RNA-binding</keyword>
<keyword id="KW-0699">rRNA-binding</keyword>
<keyword id="KW-0820">tRNA-binding</keyword>
<comment type="function">
    <text evidence="2">With S4 and S5 plays an important role in translational accuracy.</text>
</comment>
<comment type="function">
    <text evidence="2">Interacts with and stabilizes bases of the 16S rRNA that are involved in tRNA selection in the A site and with the mRNA backbone. Located at the interface of the 30S and 50S subunits, it traverses the body of the 30S subunit contacting proteins on the other side and probably holding the rRNA structure together. The combined cluster of proteins S8, S12 and S17 appears to hold together the shoulder and platform of the 30S subunit.</text>
</comment>
<comment type="subunit">
    <text evidence="2">Part of the 30S ribosomal subunit. Contacts proteins S8 and S17. May interact with IF1 in the 30S initiation complex.</text>
</comment>
<comment type="similarity">
    <text evidence="2">Belongs to the universal ribosomal protein uS12 family.</text>
</comment>
<accession>Q39Y11</accession>
<sequence length="123" mass="13669">MPTINQLIRIGRKSKKEKSNSPALKSCPQKRGVCTRVYTTTPKKPNSALRKVARVRLTNGIEVSSYIPGVGHNLQEHSVVLIRGGRVKDLPGVRYHIVRGTLDSVGVKDRKQARSKYGAKRPK</sequence>
<organism>
    <name type="scientific">Geobacter metallireducens (strain ATCC 53774 / DSM 7210 / GS-15)</name>
    <dbReference type="NCBI Taxonomy" id="269799"/>
    <lineage>
        <taxon>Bacteria</taxon>
        <taxon>Pseudomonadati</taxon>
        <taxon>Thermodesulfobacteriota</taxon>
        <taxon>Desulfuromonadia</taxon>
        <taxon>Geobacterales</taxon>
        <taxon>Geobacteraceae</taxon>
        <taxon>Geobacter</taxon>
    </lineage>
</organism>
<feature type="chain" id="PRO_0000238131" description="Small ribosomal subunit protein uS12">
    <location>
        <begin position="1"/>
        <end position="123"/>
    </location>
</feature>
<feature type="modified residue" description="3-methylthioaspartic acid" evidence="1">
    <location>
        <position position="89"/>
    </location>
</feature>
<reference key="1">
    <citation type="journal article" date="2009" name="BMC Microbiol.">
        <title>The genome sequence of Geobacter metallireducens: features of metabolism, physiology and regulation common and dissimilar to Geobacter sulfurreducens.</title>
        <authorList>
            <person name="Aklujkar M."/>
            <person name="Krushkal J."/>
            <person name="DiBartolo G."/>
            <person name="Lapidus A."/>
            <person name="Land M.L."/>
            <person name="Lovley D.R."/>
        </authorList>
    </citation>
    <scope>NUCLEOTIDE SEQUENCE [LARGE SCALE GENOMIC DNA]</scope>
    <source>
        <strain>ATCC 53774 / DSM 7210 / GS-15</strain>
    </source>
</reference>
<gene>
    <name evidence="2" type="primary">rpsL</name>
    <name type="ordered locus">Gmet_0621</name>
</gene>
<evidence type="ECO:0000250" key="1"/>
<evidence type="ECO:0000255" key="2">
    <source>
        <dbReference type="HAMAP-Rule" id="MF_00403"/>
    </source>
</evidence>
<evidence type="ECO:0000305" key="3"/>